<reference key="1">
    <citation type="submission" date="2006-02" db="EMBL/GenBank/DDBJ databases">
        <title>Complete sequence of chromosome of Rhodoferax ferrireducens DSM 15236.</title>
        <authorList>
            <person name="Copeland A."/>
            <person name="Lucas S."/>
            <person name="Lapidus A."/>
            <person name="Barry K."/>
            <person name="Detter J.C."/>
            <person name="Glavina del Rio T."/>
            <person name="Hammon N."/>
            <person name="Israni S."/>
            <person name="Pitluck S."/>
            <person name="Brettin T."/>
            <person name="Bruce D."/>
            <person name="Han C."/>
            <person name="Tapia R."/>
            <person name="Gilna P."/>
            <person name="Kiss H."/>
            <person name="Schmutz J."/>
            <person name="Larimer F."/>
            <person name="Land M."/>
            <person name="Kyrpides N."/>
            <person name="Ivanova N."/>
            <person name="Richardson P."/>
        </authorList>
    </citation>
    <scope>NUCLEOTIDE SEQUENCE [LARGE SCALE GENOMIC DNA]</scope>
    <source>
        <strain>ATCC BAA-621 / DSM 15236 / T118</strain>
    </source>
</reference>
<evidence type="ECO:0000255" key="1">
    <source>
        <dbReference type="HAMAP-Rule" id="MF_00692"/>
    </source>
</evidence>
<dbReference type="EC" id="2.7.7.-" evidence="1"/>
<dbReference type="EC" id="2.7.7.108" evidence="1"/>
<dbReference type="EMBL" id="CP000267">
    <property type="protein sequence ID" value="ABD70112.1"/>
    <property type="molecule type" value="Genomic_DNA"/>
</dbReference>
<dbReference type="RefSeq" id="WP_011464680.1">
    <property type="nucleotide sequence ID" value="NC_007908.1"/>
</dbReference>
<dbReference type="SMR" id="Q21VU1"/>
<dbReference type="STRING" id="338969.Rfer_2395"/>
<dbReference type="KEGG" id="rfr:Rfer_2395"/>
<dbReference type="eggNOG" id="COG0397">
    <property type="taxonomic scope" value="Bacteria"/>
</dbReference>
<dbReference type="HOGENOM" id="CLU_010245_4_0_4"/>
<dbReference type="OrthoDB" id="9776281at2"/>
<dbReference type="Proteomes" id="UP000008332">
    <property type="component" value="Chromosome"/>
</dbReference>
<dbReference type="GO" id="GO:0070733">
    <property type="term" value="F:AMPylase activity"/>
    <property type="evidence" value="ECO:0007669"/>
    <property type="project" value="RHEA"/>
</dbReference>
<dbReference type="GO" id="GO:0005524">
    <property type="term" value="F:ATP binding"/>
    <property type="evidence" value="ECO:0007669"/>
    <property type="project" value="UniProtKB-UniRule"/>
</dbReference>
<dbReference type="GO" id="GO:0000287">
    <property type="term" value="F:magnesium ion binding"/>
    <property type="evidence" value="ECO:0007669"/>
    <property type="project" value="UniProtKB-UniRule"/>
</dbReference>
<dbReference type="HAMAP" id="MF_00692">
    <property type="entry name" value="YdiU_SelO"/>
    <property type="match status" value="1"/>
</dbReference>
<dbReference type="InterPro" id="IPR003846">
    <property type="entry name" value="SelO"/>
</dbReference>
<dbReference type="NCBIfam" id="NF000658">
    <property type="entry name" value="PRK00029.1"/>
    <property type="match status" value="1"/>
</dbReference>
<dbReference type="PANTHER" id="PTHR32057">
    <property type="entry name" value="PROTEIN ADENYLYLTRANSFERASE SELO, MITOCHONDRIAL"/>
    <property type="match status" value="1"/>
</dbReference>
<dbReference type="PANTHER" id="PTHR32057:SF14">
    <property type="entry name" value="PROTEIN ADENYLYLTRANSFERASE SELO, MITOCHONDRIAL"/>
    <property type="match status" value="1"/>
</dbReference>
<dbReference type="Pfam" id="PF02696">
    <property type="entry name" value="SelO"/>
    <property type="match status" value="1"/>
</dbReference>
<protein>
    <recommendedName>
        <fullName evidence="1">Protein nucleotidyltransferase YdiU</fullName>
        <ecNumber evidence="1">2.7.7.-</ecNumber>
    </recommendedName>
    <alternativeName>
        <fullName evidence="1">Protein adenylyltransferase YdiU</fullName>
        <ecNumber evidence="1">2.7.7.108</ecNumber>
    </alternativeName>
    <alternativeName>
        <fullName evidence="1">Protein uridylyltransferase YdiU</fullName>
        <ecNumber evidence="1">2.7.7.-</ecNumber>
    </alternativeName>
</protein>
<proteinExistence type="inferred from homology"/>
<comment type="function">
    <text evidence="1">Nucleotidyltransferase involved in the post-translational modification of proteins. It can catalyze the addition of adenosine monophosphate (AMP) or uridine monophosphate (UMP) to a protein, resulting in modifications known as AMPylation and UMPylation.</text>
</comment>
<comment type="catalytic activity">
    <reaction evidence="1">
        <text>L-seryl-[protein] + ATP = 3-O-(5'-adenylyl)-L-seryl-[protein] + diphosphate</text>
        <dbReference type="Rhea" id="RHEA:58120"/>
        <dbReference type="Rhea" id="RHEA-COMP:9863"/>
        <dbReference type="Rhea" id="RHEA-COMP:15073"/>
        <dbReference type="ChEBI" id="CHEBI:29999"/>
        <dbReference type="ChEBI" id="CHEBI:30616"/>
        <dbReference type="ChEBI" id="CHEBI:33019"/>
        <dbReference type="ChEBI" id="CHEBI:142516"/>
        <dbReference type="EC" id="2.7.7.108"/>
    </reaction>
</comment>
<comment type="catalytic activity">
    <reaction evidence="1">
        <text>L-threonyl-[protein] + ATP = 3-O-(5'-adenylyl)-L-threonyl-[protein] + diphosphate</text>
        <dbReference type="Rhea" id="RHEA:54292"/>
        <dbReference type="Rhea" id="RHEA-COMP:11060"/>
        <dbReference type="Rhea" id="RHEA-COMP:13847"/>
        <dbReference type="ChEBI" id="CHEBI:30013"/>
        <dbReference type="ChEBI" id="CHEBI:30616"/>
        <dbReference type="ChEBI" id="CHEBI:33019"/>
        <dbReference type="ChEBI" id="CHEBI:138113"/>
        <dbReference type="EC" id="2.7.7.108"/>
    </reaction>
</comment>
<comment type="catalytic activity">
    <reaction evidence="1">
        <text>L-tyrosyl-[protein] + ATP = O-(5'-adenylyl)-L-tyrosyl-[protein] + diphosphate</text>
        <dbReference type="Rhea" id="RHEA:54288"/>
        <dbReference type="Rhea" id="RHEA-COMP:10136"/>
        <dbReference type="Rhea" id="RHEA-COMP:13846"/>
        <dbReference type="ChEBI" id="CHEBI:30616"/>
        <dbReference type="ChEBI" id="CHEBI:33019"/>
        <dbReference type="ChEBI" id="CHEBI:46858"/>
        <dbReference type="ChEBI" id="CHEBI:83624"/>
        <dbReference type="EC" id="2.7.7.108"/>
    </reaction>
</comment>
<comment type="catalytic activity">
    <reaction evidence="1">
        <text>L-histidyl-[protein] + UTP = N(tele)-(5'-uridylyl)-L-histidyl-[protein] + diphosphate</text>
        <dbReference type="Rhea" id="RHEA:83891"/>
        <dbReference type="Rhea" id="RHEA-COMP:9745"/>
        <dbReference type="Rhea" id="RHEA-COMP:20239"/>
        <dbReference type="ChEBI" id="CHEBI:29979"/>
        <dbReference type="ChEBI" id="CHEBI:33019"/>
        <dbReference type="ChEBI" id="CHEBI:46398"/>
        <dbReference type="ChEBI" id="CHEBI:233474"/>
    </reaction>
</comment>
<comment type="catalytic activity">
    <reaction evidence="1">
        <text>L-seryl-[protein] + UTP = O-(5'-uridylyl)-L-seryl-[protein] + diphosphate</text>
        <dbReference type="Rhea" id="RHEA:64604"/>
        <dbReference type="Rhea" id="RHEA-COMP:9863"/>
        <dbReference type="Rhea" id="RHEA-COMP:16635"/>
        <dbReference type="ChEBI" id="CHEBI:29999"/>
        <dbReference type="ChEBI" id="CHEBI:33019"/>
        <dbReference type="ChEBI" id="CHEBI:46398"/>
        <dbReference type="ChEBI" id="CHEBI:156051"/>
    </reaction>
</comment>
<comment type="catalytic activity">
    <reaction evidence="1">
        <text>L-tyrosyl-[protein] + UTP = O-(5'-uridylyl)-L-tyrosyl-[protein] + diphosphate</text>
        <dbReference type="Rhea" id="RHEA:83887"/>
        <dbReference type="Rhea" id="RHEA-COMP:10136"/>
        <dbReference type="Rhea" id="RHEA-COMP:20238"/>
        <dbReference type="ChEBI" id="CHEBI:33019"/>
        <dbReference type="ChEBI" id="CHEBI:46398"/>
        <dbReference type="ChEBI" id="CHEBI:46858"/>
        <dbReference type="ChEBI" id="CHEBI:90602"/>
    </reaction>
</comment>
<comment type="cofactor">
    <cofactor evidence="1">
        <name>Mg(2+)</name>
        <dbReference type="ChEBI" id="CHEBI:18420"/>
    </cofactor>
    <cofactor evidence="1">
        <name>Mn(2+)</name>
        <dbReference type="ChEBI" id="CHEBI:29035"/>
    </cofactor>
</comment>
<comment type="similarity">
    <text evidence="1">Belongs to the SELO family.</text>
</comment>
<feature type="chain" id="PRO_0000271856" description="Protein nucleotidyltransferase YdiU">
    <location>
        <begin position="1"/>
        <end position="496"/>
    </location>
</feature>
<feature type="active site" description="Proton acceptor" evidence="1">
    <location>
        <position position="259"/>
    </location>
</feature>
<feature type="binding site" evidence="1">
    <location>
        <position position="98"/>
    </location>
    <ligand>
        <name>ATP</name>
        <dbReference type="ChEBI" id="CHEBI:30616"/>
    </ligand>
</feature>
<feature type="binding site" evidence="1">
    <location>
        <position position="100"/>
    </location>
    <ligand>
        <name>ATP</name>
        <dbReference type="ChEBI" id="CHEBI:30616"/>
    </ligand>
</feature>
<feature type="binding site" evidence="1">
    <location>
        <position position="101"/>
    </location>
    <ligand>
        <name>ATP</name>
        <dbReference type="ChEBI" id="CHEBI:30616"/>
    </ligand>
</feature>
<feature type="binding site" evidence="1">
    <location>
        <position position="116"/>
    </location>
    <ligand>
        <name>ATP</name>
        <dbReference type="ChEBI" id="CHEBI:30616"/>
    </ligand>
</feature>
<feature type="binding site" evidence="1">
    <location>
        <position position="128"/>
    </location>
    <ligand>
        <name>ATP</name>
        <dbReference type="ChEBI" id="CHEBI:30616"/>
    </ligand>
</feature>
<feature type="binding site" evidence="1">
    <location>
        <position position="129"/>
    </location>
    <ligand>
        <name>ATP</name>
        <dbReference type="ChEBI" id="CHEBI:30616"/>
    </ligand>
</feature>
<feature type="binding site" evidence="1">
    <location>
        <position position="179"/>
    </location>
    <ligand>
        <name>ATP</name>
        <dbReference type="ChEBI" id="CHEBI:30616"/>
    </ligand>
</feature>
<feature type="binding site" evidence="1">
    <location>
        <position position="186"/>
    </location>
    <ligand>
        <name>ATP</name>
        <dbReference type="ChEBI" id="CHEBI:30616"/>
    </ligand>
</feature>
<feature type="binding site" evidence="1">
    <location>
        <position position="260"/>
    </location>
    <ligand>
        <name>Mg(2+)</name>
        <dbReference type="ChEBI" id="CHEBI:18420"/>
    </ligand>
</feature>
<feature type="binding site" evidence="1">
    <location>
        <position position="269"/>
    </location>
    <ligand>
        <name>ATP</name>
        <dbReference type="ChEBI" id="CHEBI:30616"/>
    </ligand>
</feature>
<feature type="binding site" evidence="1">
    <location>
        <position position="269"/>
    </location>
    <ligand>
        <name>Mg(2+)</name>
        <dbReference type="ChEBI" id="CHEBI:18420"/>
    </ligand>
</feature>
<accession>Q21VU1</accession>
<gene>
    <name evidence="1" type="primary">ydiU</name>
    <name evidence="1" type="synonym">selO</name>
    <name type="ordered locus">Rfer_2395</name>
</gene>
<keyword id="KW-0067">ATP-binding</keyword>
<keyword id="KW-0460">Magnesium</keyword>
<keyword id="KW-0464">Manganese</keyword>
<keyword id="KW-0479">Metal-binding</keyword>
<keyword id="KW-0547">Nucleotide-binding</keyword>
<keyword id="KW-0548">Nucleotidyltransferase</keyword>
<keyword id="KW-1185">Reference proteome</keyword>
<keyword id="KW-0808">Transferase</keyword>
<organism>
    <name type="scientific">Albidiferax ferrireducens (strain ATCC BAA-621 / DSM 15236 / T118)</name>
    <name type="common">Rhodoferax ferrireducens</name>
    <dbReference type="NCBI Taxonomy" id="338969"/>
    <lineage>
        <taxon>Bacteria</taxon>
        <taxon>Pseudomonadati</taxon>
        <taxon>Pseudomonadota</taxon>
        <taxon>Betaproteobacteria</taxon>
        <taxon>Burkholderiales</taxon>
        <taxon>Comamonadaceae</taxon>
        <taxon>Rhodoferax</taxon>
    </lineage>
</organism>
<sequence>MTVATQNLTALDVGLAWRNSFAQLGKSFYTPLAPWPLPAPYWVGRSTSTARELGLSESWLDSPELLQVLTGNQPMAGTQPLASVYSGHQFGQWAGQLGDGRAILLGETGGLEVQLKGSGLTPYSRMGDGRAVLRSSIREFLCSEAMQGLGIATSRALCVVGSDAPIRRETVETAAVVTRVAPSFIRFGHFEHFSHHDQHAQLKVLADYVIDRFYPECRASDKFAGNPYAALLEAVSERTAALVAQWQAVGFCHGVLNTDNMSILGLTIDYGPFQFLDAFNPGHVCNHSDQEGRYAFDKQPNIAYWNLFCLGQALLPLIGEQELAIAALESYKTVFPAAFERLMFAKLGLLDASDSTATVDRALLQDILQLLAREQVDYTIFWRRLSHCGVATDAQTVRDLFVDRSAADAWLLRYSERLEHIPQGLAADLMLKTNPKFVLRNYLGEQAIQAAKLKDFSQVETLLMLLESPFEEHPGFDKYADFPPDWASSIEISCSS</sequence>
<name>SELO_ALBFT</name>